<protein>
    <recommendedName>
        <fullName>Ribonucleoside-diphosphate reductase large subunit</fullName>
        <ecNumber>1.17.4.1</ecNumber>
    </recommendedName>
    <alternativeName>
        <fullName>Ribonucleotide reductase large subunit</fullName>
    </alternativeName>
</protein>
<keyword id="KW-0021">Allosteric enzyme</keyword>
<keyword id="KW-0067">ATP-binding</keyword>
<keyword id="KW-0215">Deoxyribonucleotide synthesis</keyword>
<keyword id="KW-1015">Disulfide bond</keyword>
<keyword id="KW-0244">Early protein</keyword>
<keyword id="KW-0547">Nucleotide-binding</keyword>
<keyword id="KW-0560">Oxidoreductase</keyword>
<keyword id="KW-1185">Reference proteome</keyword>
<sequence>METFFIETLASDVYGKALNVDLDRLSQAQVKYTLQELISYCSALTILHYDYSTLAARLSVYQLHQSTASSFSKAVRLQAAQSCSRLSPQFVDVVYKYKAIFDSYIDYNRDYKLSLLGIETMKNSYLLKNKDGVIMERPQDAYMRVAIMIYGMGKVVNIKMILLTYDLLSRHVITHASPTMFNAGTKKPQLSSCFLLNVNDNLENLYDMVKTAGIISGGGGGIGLCLSGIRAKNSFISGSGLRSNGIQNYIMLQNASQCYANQGGLRPGAYAVYLELWHQDIFTFLQMPRLKGQMAEQRLNAPNLKYGLWVPDLFMEILEDQIHNRGDGTWYLFSPDQAPNLHKVFDLERSQHENAHREFKKLYYQYVAEKRYTGVTTAKEIIKEWFKTVIQVGNPYIGFKDAINRKSNLSHVGTITNSNLCIEVTIPCWEGDKAEQGVCNLAAVNLAAFIRENGYDYRGLIEASGNVTENLDNIIDNGYYPTEATRRSNMRHRPIGIGVFGLADVFASLKMKFGSPEAIAMDEAIHAALYYGAMRRSIELAKEKGSHPSFPGSAASKGLLQPDLWVRCGDLSSSWEERVAQTTQGVLTRKSWWQLRLAAMQGVRNGYLTALMPTATSSNSTGKNECFEPFTSNLYTRRTLSGEFIVLNKYLIDDLKEIDLWTEAIQQQLLNAGGSIQHILDIPAEIRDRYKTSREMNQKILTKHAAARNPFVSQSMSLNYYFYEPELSQVLTVLVLGWKKGLTTGSYYCHFSPGAGTQKKIIRNSEKACNADCEACLL</sequence>
<name>RIR1_ASFB7</name>
<organismHost>
    <name type="scientific">Ornithodoros</name>
    <name type="common">relapsing fever ticks</name>
    <dbReference type="NCBI Taxonomy" id="6937"/>
</organismHost>
<organismHost>
    <name type="scientific">Sus scrofa</name>
    <name type="common">Pig</name>
    <dbReference type="NCBI Taxonomy" id="9823"/>
</organismHost>
<proteinExistence type="evidence at transcript level"/>
<evidence type="ECO:0000250" key="1"/>
<evidence type="ECO:0000269" key="2">
    <source>
    </source>
</evidence>
<evidence type="ECO:0000305" key="3"/>
<dbReference type="EC" id="1.17.4.1"/>
<dbReference type="EMBL" id="U18466">
    <property type="protein sequence ID" value="AAA65275.1"/>
    <property type="molecule type" value="Genomic_DNA"/>
</dbReference>
<dbReference type="RefSeq" id="NP_042739.1">
    <property type="nucleotide sequence ID" value="NC_001659.2"/>
</dbReference>
<dbReference type="SMR" id="P42491"/>
<dbReference type="GeneID" id="22220427"/>
<dbReference type="KEGG" id="vg:22220427"/>
<dbReference type="Proteomes" id="UP000000624">
    <property type="component" value="Segment"/>
</dbReference>
<dbReference type="GO" id="GO:0005524">
    <property type="term" value="F:ATP binding"/>
    <property type="evidence" value="ECO:0007669"/>
    <property type="project" value="UniProtKB-KW"/>
</dbReference>
<dbReference type="GO" id="GO:0004748">
    <property type="term" value="F:ribonucleoside-diphosphate reductase activity, thioredoxin disulfide as acceptor"/>
    <property type="evidence" value="ECO:0007669"/>
    <property type="project" value="UniProtKB-EC"/>
</dbReference>
<dbReference type="GO" id="GO:0009263">
    <property type="term" value="P:deoxyribonucleotide biosynthetic process"/>
    <property type="evidence" value="ECO:0007669"/>
    <property type="project" value="UniProtKB-KW"/>
</dbReference>
<dbReference type="Gene3D" id="3.20.70.20">
    <property type="match status" value="1"/>
</dbReference>
<dbReference type="InterPro" id="IPR013346">
    <property type="entry name" value="NrdE_NrdA_C"/>
</dbReference>
<dbReference type="InterPro" id="IPR000788">
    <property type="entry name" value="RNR_lg_C"/>
</dbReference>
<dbReference type="InterPro" id="IPR013509">
    <property type="entry name" value="RNR_lsu_N"/>
</dbReference>
<dbReference type="InterPro" id="IPR008926">
    <property type="entry name" value="RNR_R1-su_N"/>
</dbReference>
<dbReference type="InterPro" id="IPR039718">
    <property type="entry name" value="Rrm1"/>
</dbReference>
<dbReference type="NCBIfam" id="TIGR02506">
    <property type="entry name" value="NrdE_NrdA"/>
    <property type="match status" value="1"/>
</dbReference>
<dbReference type="PANTHER" id="PTHR11573">
    <property type="entry name" value="RIBONUCLEOSIDE-DIPHOSPHATE REDUCTASE LARGE CHAIN"/>
    <property type="match status" value="1"/>
</dbReference>
<dbReference type="PANTHER" id="PTHR11573:SF6">
    <property type="entry name" value="RIBONUCLEOSIDE-DIPHOSPHATE REDUCTASE LARGE SUBUNIT"/>
    <property type="match status" value="1"/>
</dbReference>
<dbReference type="Pfam" id="PF02867">
    <property type="entry name" value="Ribonuc_red_lgC"/>
    <property type="match status" value="1"/>
</dbReference>
<dbReference type="Pfam" id="PF00317">
    <property type="entry name" value="Ribonuc_red_lgN"/>
    <property type="match status" value="1"/>
</dbReference>
<dbReference type="PRINTS" id="PR01183">
    <property type="entry name" value="RIBORDTASEM1"/>
</dbReference>
<dbReference type="SUPFAM" id="SSF51998">
    <property type="entry name" value="PFL-like glycyl radical enzymes"/>
    <property type="match status" value="1"/>
</dbReference>
<dbReference type="SUPFAM" id="SSF48168">
    <property type="entry name" value="R1 subunit of ribonucleotide reductase, N-terminal domain"/>
    <property type="match status" value="1"/>
</dbReference>
<dbReference type="PROSITE" id="PS00089">
    <property type="entry name" value="RIBORED_LARGE"/>
    <property type="match status" value="1"/>
</dbReference>
<accession>P42491</accession>
<reference key="1">
    <citation type="journal article" date="1995" name="Virology">
        <title>Analysis of the complete nucleotide sequence of African swine fever virus.</title>
        <authorList>
            <person name="Yanez R.J."/>
            <person name="Rodriguez J.M."/>
            <person name="Nogal M.L."/>
            <person name="Yuste L."/>
            <person name="Enriquez C."/>
            <person name="Rodriguez J.F."/>
            <person name="Vinuela E."/>
        </authorList>
    </citation>
    <scope>NUCLEOTIDE SEQUENCE [LARGE SCALE GENOMIC DNA]</scope>
</reference>
<reference key="2">
    <citation type="journal article" date="2020" name="J. Virol.">
        <title>The African Swine Fever Virus Transcriptome.</title>
        <authorList>
            <person name="Cackett G."/>
            <person name="Matelska D."/>
            <person name="Sykora M."/>
            <person name="Portugal R."/>
            <person name="Malecki M."/>
            <person name="Baehler J."/>
            <person name="Dixon L."/>
            <person name="Werner F."/>
        </authorList>
    </citation>
    <scope>INDUCTION</scope>
</reference>
<feature type="chain" id="PRO_0000187227" description="Ribonucleoside-diphosphate reductase large subunit">
    <location>
        <begin position="1"/>
        <end position="778"/>
    </location>
</feature>
<feature type="active site" description="Proton acceptor" evidence="1">
    <location>
        <position position="419"/>
    </location>
</feature>
<feature type="active site" description="Cysteine radical intermediate" evidence="1">
    <location>
        <position position="421"/>
    </location>
</feature>
<feature type="active site" description="Proton acceptor" evidence="1">
    <location>
        <position position="423"/>
    </location>
</feature>
<feature type="binding site" evidence="1">
    <location>
        <position position="177"/>
    </location>
    <ligand>
        <name>substrate</name>
    </ligand>
</feature>
<feature type="binding site" evidence="1">
    <location>
        <begin position="192"/>
        <end position="193"/>
    </location>
    <ligand>
        <name>substrate</name>
    </ligand>
</feature>
<feature type="binding site" evidence="1">
    <location>
        <position position="221"/>
    </location>
    <ligand>
        <name>substrate</name>
    </ligand>
</feature>
<feature type="binding site" evidence="1">
    <location>
        <begin position="419"/>
        <end position="423"/>
    </location>
    <ligand>
        <name>substrate</name>
    </ligand>
</feature>
<feature type="binding site" evidence="1">
    <location>
        <begin position="613"/>
        <end position="617"/>
    </location>
    <ligand>
        <name>substrate</name>
    </ligand>
</feature>
<feature type="site" description="Important for hydrogen atom transfer" evidence="1">
    <location>
        <position position="193"/>
    </location>
</feature>
<feature type="site" description="Allosteric effector binding" evidence="1">
    <location>
        <position position="200"/>
    </location>
</feature>
<feature type="site" description="Allosteric effector binding" evidence="1">
    <location>
        <position position="230"/>
    </location>
</feature>
<feature type="site" description="Important for hydrogen atom transfer" evidence="1">
    <location>
        <position position="439"/>
    </location>
</feature>
<feature type="site" description="Important for electron transfer" evidence="1">
    <location>
        <position position="747"/>
    </location>
</feature>
<feature type="site" description="Important for electron transfer" evidence="1">
    <location>
        <position position="748"/>
    </location>
</feature>
<feature type="site" description="Interacts with thioredoxin/glutaredoxin" evidence="1">
    <location>
        <position position="773"/>
    </location>
</feature>
<feature type="site" description="Interacts with thioredoxin/glutaredoxin" evidence="1">
    <location>
        <position position="776"/>
    </location>
</feature>
<feature type="disulfide bond" description="Redox-active" evidence="1">
    <location>
        <begin position="193"/>
        <end position="439"/>
    </location>
</feature>
<gene>
    <name type="ordered locus">Ba71V-045</name>
    <name type="ORF">F778R</name>
</gene>
<comment type="function">
    <text evidence="1">Ribonucleoside-diphosphate reductase holoenzyme provides the precursors necessary for viral DNA synthesis. Allows virus growth in non-dividing cells. Catalyzes the biosynthesis of deoxyribonucleotides from the corresponding ribonucleotides (By similarity).</text>
</comment>
<comment type="catalytic activity">
    <reaction>
        <text>a 2'-deoxyribonucleoside 5'-diphosphate + [thioredoxin]-disulfide + H2O = a ribonucleoside 5'-diphosphate + [thioredoxin]-dithiol</text>
        <dbReference type="Rhea" id="RHEA:23252"/>
        <dbReference type="Rhea" id="RHEA-COMP:10698"/>
        <dbReference type="Rhea" id="RHEA-COMP:10700"/>
        <dbReference type="ChEBI" id="CHEBI:15377"/>
        <dbReference type="ChEBI" id="CHEBI:29950"/>
        <dbReference type="ChEBI" id="CHEBI:50058"/>
        <dbReference type="ChEBI" id="CHEBI:57930"/>
        <dbReference type="ChEBI" id="CHEBI:73316"/>
        <dbReference type="EC" id="1.17.4.1"/>
    </reaction>
</comment>
<comment type="activity regulation">
    <text evidence="1">Under complex allosteric control mediated by deoxynucleoside triphosphates and ATP binding. The type of nucleotide bound at the specificity site determines substrate preference. It seems probable that ATP makes the enzyme reduce CDP and UDP, dGTP favors ADP reduction and dTTP favors GDP reduction (By similarity).</text>
</comment>
<comment type="subunit">
    <text evidence="1">Heterotetramer composed of a homodimer of the large subunit (R1) and a homodimer of the small subunit (R2). Larger multisubunit protein complex are also active, composed of (R1)n(R2)n (By similarity).</text>
</comment>
<comment type="induction">
    <text evidence="2">Expressed in the early phase of the viral replicative cycle.</text>
</comment>
<comment type="similarity">
    <text evidence="3">Belongs to the ribonucleoside diphosphate reductase large chain family.</text>
</comment>
<organism>
    <name type="scientific">African swine fever virus (strain Badajoz 1971 Vero-adapted)</name>
    <name type="common">Ba71V</name>
    <name type="synonym">ASFV</name>
    <dbReference type="NCBI Taxonomy" id="10498"/>
    <lineage>
        <taxon>Viruses</taxon>
        <taxon>Varidnaviria</taxon>
        <taxon>Bamfordvirae</taxon>
        <taxon>Nucleocytoviricota</taxon>
        <taxon>Pokkesviricetes</taxon>
        <taxon>Asfuvirales</taxon>
        <taxon>Asfarviridae</taxon>
        <taxon>Asfivirus</taxon>
        <taxon>African swine fever virus</taxon>
    </lineage>
</organism>